<proteinExistence type="inferred from homology"/>
<accession>Q98PK9</accession>
<sequence length="307" mass="33456">MSQNKIYDVAIIGAGPGALTAAIYTSRGNLDTVFIDNAAPGGKLIYASKIENWPGDTIVKGTDLAIRFFEHAQAFGAKYEYGKVVDLINIKDDLKELVLEDGKKIQAKSVIIASGMVSRKPREILNYDEFENRGVSYCVICDGPMYGHNPAIIIGGGNSAVEEGTFLSSIASKVYVIVRDSDFIAEKALVNDLKSRKNIEVLFNASVKELHGKDALEYAIVNHNGKEVKLEVASLFPYIGFLPSAEYAKNAGVLEPNGFIKTDEFMETKVPGIYAIGDIRIKDIRQILTATSDGTIAGKILTNRIKK</sequence>
<dbReference type="EC" id="1.8.1.9"/>
<dbReference type="EMBL" id="AL445565">
    <property type="protein sequence ID" value="CAC13886.1"/>
    <property type="molecule type" value="Genomic_DNA"/>
</dbReference>
<dbReference type="PIR" id="A99601">
    <property type="entry name" value="A99601"/>
</dbReference>
<dbReference type="RefSeq" id="WP_010925514.1">
    <property type="nucleotide sequence ID" value="NC_002771.1"/>
</dbReference>
<dbReference type="SMR" id="Q98PK9"/>
<dbReference type="STRING" id="272635.gene:17577324"/>
<dbReference type="KEGG" id="mpu:MYPU_7130"/>
<dbReference type="eggNOG" id="COG0492">
    <property type="taxonomic scope" value="Bacteria"/>
</dbReference>
<dbReference type="HOGENOM" id="CLU_031864_5_3_14"/>
<dbReference type="BioCyc" id="MPUL272635:G1GT6-726-MONOMER"/>
<dbReference type="Proteomes" id="UP000000528">
    <property type="component" value="Chromosome"/>
</dbReference>
<dbReference type="GO" id="GO:0005737">
    <property type="term" value="C:cytoplasm"/>
    <property type="evidence" value="ECO:0007669"/>
    <property type="project" value="UniProtKB-SubCell"/>
</dbReference>
<dbReference type="GO" id="GO:0004791">
    <property type="term" value="F:thioredoxin-disulfide reductase (NADPH) activity"/>
    <property type="evidence" value="ECO:0007669"/>
    <property type="project" value="UniProtKB-EC"/>
</dbReference>
<dbReference type="Gene3D" id="3.50.50.60">
    <property type="entry name" value="FAD/NAD(P)-binding domain"/>
    <property type="match status" value="2"/>
</dbReference>
<dbReference type="InterPro" id="IPR036188">
    <property type="entry name" value="FAD/NAD-bd_sf"/>
</dbReference>
<dbReference type="InterPro" id="IPR023753">
    <property type="entry name" value="FAD/NAD-binding_dom"/>
</dbReference>
<dbReference type="InterPro" id="IPR050097">
    <property type="entry name" value="Ferredoxin-NADP_redctase_2"/>
</dbReference>
<dbReference type="InterPro" id="IPR008255">
    <property type="entry name" value="Pyr_nucl-diS_OxRdtase_2_AS"/>
</dbReference>
<dbReference type="PANTHER" id="PTHR48105">
    <property type="entry name" value="THIOREDOXIN REDUCTASE 1-RELATED-RELATED"/>
    <property type="match status" value="1"/>
</dbReference>
<dbReference type="Pfam" id="PF07992">
    <property type="entry name" value="Pyr_redox_2"/>
    <property type="match status" value="1"/>
</dbReference>
<dbReference type="PRINTS" id="PR00368">
    <property type="entry name" value="FADPNR"/>
</dbReference>
<dbReference type="PRINTS" id="PR00469">
    <property type="entry name" value="PNDRDTASEII"/>
</dbReference>
<dbReference type="SUPFAM" id="SSF51905">
    <property type="entry name" value="FAD/NAD(P)-binding domain"/>
    <property type="match status" value="1"/>
</dbReference>
<dbReference type="PROSITE" id="PS00573">
    <property type="entry name" value="PYRIDINE_REDOX_2"/>
    <property type="match status" value="1"/>
</dbReference>
<name>TRXB_MYCPU</name>
<protein>
    <recommendedName>
        <fullName>Thioredoxin reductase</fullName>
        <shortName>TRXR</shortName>
        <ecNumber>1.8.1.9</ecNumber>
    </recommendedName>
</protein>
<reference key="1">
    <citation type="journal article" date="2001" name="Nucleic Acids Res.">
        <title>The complete genome sequence of the murine respiratory pathogen Mycoplasma pulmonis.</title>
        <authorList>
            <person name="Chambaud I."/>
            <person name="Heilig R."/>
            <person name="Ferris S."/>
            <person name="Barbe V."/>
            <person name="Samson D."/>
            <person name="Galisson F."/>
            <person name="Moszer I."/>
            <person name="Dybvig K."/>
            <person name="Wroblewski H."/>
            <person name="Viari A."/>
            <person name="Rocha E.P.C."/>
            <person name="Blanchard A."/>
        </authorList>
    </citation>
    <scope>NUCLEOTIDE SEQUENCE [LARGE SCALE GENOMIC DNA]</scope>
    <source>
        <strain>UAB CTIP</strain>
    </source>
</reference>
<feature type="chain" id="PRO_0000166739" description="Thioredoxin reductase">
    <location>
        <begin position="1"/>
        <end position="307"/>
    </location>
</feature>
<feature type="binding site" evidence="2">
    <location>
        <begin position="36"/>
        <end position="43"/>
    </location>
    <ligand>
        <name>FAD</name>
        <dbReference type="ChEBI" id="CHEBI:57692"/>
    </ligand>
</feature>
<feature type="binding site" evidence="2">
    <location>
        <begin position="278"/>
        <end position="287"/>
    </location>
    <ligand>
        <name>FAD</name>
        <dbReference type="ChEBI" id="CHEBI:57692"/>
    </ligand>
</feature>
<feature type="disulfide bond" description="Redox-active" evidence="2">
    <location>
        <begin position="138"/>
        <end position="141"/>
    </location>
</feature>
<organism>
    <name type="scientific">Mycoplasmopsis pulmonis (strain UAB CTIP)</name>
    <name type="common">Mycoplasma pulmonis</name>
    <dbReference type="NCBI Taxonomy" id="272635"/>
    <lineage>
        <taxon>Bacteria</taxon>
        <taxon>Bacillati</taxon>
        <taxon>Mycoplasmatota</taxon>
        <taxon>Mycoplasmoidales</taxon>
        <taxon>Metamycoplasmataceae</taxon>
        <taxon>Mycoplasmopsis</taxon>
    </lineage>
</organism>
<evidence type="ECO:0000250" key="1"/>
<evidence type="ECO:0000250" key="2">
    <source>
        <dbReference type="UniProtKB" id="P0A9P4"/>
    </source>
</evidence>
<evidence type="ECO:0000305" key="3"/>
<gene>
    <name type="primary">trxB</name>
    <name type="ordered locus">MYPU_7130</name>
</gene>
<keyword id="KW-0963">Cytoplasm</keyword>
<keyword id="KW-1015">Disulfide bond</keyword>
<keyword id="KW-0274">FAD</keyword>
<keyword id="KW-0285">Flavoprotein</keyword>
<keyword id="KW-0521">NADP</keyword>
<keyword id="KW-0560">Oxidoreductase</keyword>
<keyword id="KW-0676">Redox-active center</keyword>
<keyword id="KW-1185">Reference proteome</keyword>
<comment type="catalytic activity">
    <reaction>
        <text>[thioredoxin]-dithiol + NADP(+) = [thioredoxin]-disulfide + NADPH + H(+)</text>
        <dbReference type="Rhea" id="RHEA:20345"/>
        <dbReference type="Rhea" id="RHEA-COMP:10698"/>
        <dbReference type="Rhea" id="RHEA-COMP:10700"/>
        <dbReference type="ChEBI" id="CHEBI:15378"/>
        <dbReference type="ChEBI" id="CHEBI:29950"/>
        <dbReference type="ChEBI" id="CHEBI:50058"/>
        <dbReference type="ChEBI" id="CHEBI:57783"/>
        <dbReference type="ChEBI" id="CHEBI:58349"/>
        <dbReference type="EC" id="1.8.1.9"/>
    </reaction>
</comment>
<comment type="cofactor">
    <cofactor evidence="2">
        <name>FAD</name>
        <dbReference type="ChEBI" id="CHEBI:57692"/>
    </cofactor>
    <text evidence="2">Binds 1 FAD per subunit.</text>
</comment>
<comment type="subunit">
    <text evidence="2">Homodimer.</text>
</comment>
<comment type="subcellular location">
    <subcellularLocation>
        <location evidence="1">Cytoplasm</location>
    </subcellularLocation>
</comment>
<comment type="miscellaneous">
    <text>The active site is a redox-active disulfide bond.</text>
</comment>
<comment type="similarity">
    <text evidence="3">Belongs to the class-II pyridine nucleotide-disulfide oxidoreductase family.</text>
</comment>